<dbReference type="EC" id="3.5.1.5" evidence="1"/>
<dbReference type="EMBL" id="CP000151">
    <property type="protein sequence ID" value="ABB07605.1"/>
    <property type="molecule type" value="Genomic_DNA"/>
</dbReference>
<dbReference type="RefSeq" id="WP_006406310.1">
    <property type="nucleotide sequence ID" value="NZ_WNDV01000014.1"/>
</dbReference>
<dbReference type="SMR" id="Q39IW1"/>
<dbReference type="GeneID" id="98102707"/>
<dbReference type="KEGG" id="bur:Bcep18194_A4008"/>
<dbReference type="HOGENOM" id="CLU_145825_1_0_4"/>
<dbReference type="UniPathway" id="UPA00258">
    <property type="reaction ID" value="UER00370"/>
</dbReference>
<dbReference type="Proteomes" id="UP000002705">
    <property type="component" value="Chromosome 1"/>
</dbReference>
<dbReference type="GO" id="GO:0005737">
    <property type="term" value="C:cytoplasm"/>
    <property type="evidence" value="ECO:0007669"/>
    <property type="project" value="UniProtKB-SubCell"/>
</dbReference>
<dbReference type="GO" id="GO:0016151">
    <property type="term" value="F:nickel cation binding"/>
    <property type="evidence" value="ECO:0007669"/>
    <property type="project" value="InterPro"/>
</dbReference>
<dbReference type="GO" id="GO:0009039">
    <property type="term" value="F:urease activity"/>
    <property type="evidence" value="ECO:0007669"/>
    <property type="project" value="UniProtKB-UniRule"/>
</dbReference>
<dbReference type="GO" id="GO:0043419">
    <property type="term" value="P:urea catabolic process"/>
    <property type="evidence" value="ECO:0007669"/>
    <property type="project" value="UniProtKB-UniRule"/>
</dbReference>
<dbReference type="CDD" id="cd00390">
    <property type="entry name" value="Urease_gamma"/>
    <property type="match status" value="1"/>
</dbReference>
<dbReference type="Gene3D" id="3.30.280.10">
    <property type="entry name" value="Urease, gamma-like subunit"/>
    <property type="match status" value="1"/>
</dbReference>
<dbReference type="HAMAP" id="MF_00739">
    <property type="entry name" value="Urease_gamma"/>
    <property type="match status" value="1"/>
</dbReference>
<dbReference type="InterPro" id="IPR012010">
    <property type="entry name" value="Urease_gamma"/>
</dbReference>
<dbReference type="InterPro" id="IPR002026">
    <property type="entry name" value="Urease_gamma/gamma-beta_su"/>
</dbReference>
<dbReference type="InterPro" id="IPR036463">
    <property type="entry name" value="Urease_gamma_sf"/>
</dbReference>
<dbReference type="InterPro" id="IPR050069">
    <property type="entry name" value="Urease_subunit"/>
</dbReference>
<dbReference type="NCBIfam" id="NF009712">
    <property type="entry name" value="PRK13241.1"/>
    <property type="match status" value="1"/>
</dbReference>
<dbReference type="NCBIfam" id="TIGR00193">
    <property type="entry name" value="urease_gam"/>
    <property type="match status" value="1"/>
</dbReference>
<dbReference type="PANTHER" id="PTHR33569">
    <property type="entry name" value="UREASE"/>
    <property type="match status" value="1"/>
</dbReference>
<dbReference type="PANTHER" id="PTHR33569:SF1">
    <property type="entry name" value="UREASE"/>
    <property type="match status" value="1"/>
</dbReference>
<dbReference type="Pfam" id="PF00547">
    <property type="entry name" value="Urease_gamma"/>
    <property type="match status" value="1"/>
</dbReference>
<dbReference type="PIRSF" id="PIRSF001223">
    <property type="entry name" value="Urease_gamma"/>
    <property type="match status" value="1"/>
</dbReference>
<dbReference type="SUPFAM" id="SSF54111">
    <property type="entry name" value="Urease, gamma-subunit"/>
    <property type="match status" value="1"/>
</dbReference>
<sequence length="100" mass="11100">MKLTPREKDKLLIFTAALLAERRRARGLKLNYPEAVAFITAALMEAARDGKTVAEVMHYGTTLLTRDDVMDGVPEMIPDIQVEATFPDGTKLVTVHHPIP</sequence>
<keyword id="KW-0963">Cytoplasm</keyword>
<keyword id="KW-0378">Hydrolase</keyword>
<feature type="chain" id="PRO_0000234202" description="Urease subunit gamma">
    <location>
        <begin position="1"/>
        <end position="100"/>
    </location>
</feature>
<protein>
    <recommendedName>
        <fullName evidence="1">Urease subunit gamma</fullName>
        <ecNumber evidence="1">3.5.1.5</ecNumber>
    </recommendedName>
    <alternativeName>
        <fullName evidence="1">Urea amidohydrolase subunit gamma</fullName>
    </alternativeName>
</protein>
<accession>Q39IW1</accession>
<proteinExistence type="inferred from homology"/>
<organism>
    <name type="scientific">Burkholderia lata (strain ATCC 17760 / DSM 23089 / LMG 22485 / NCIMB 9086 / R18194 / 383)</name>
    <dbReference type="NCBI Taxonomy" id="482957"/>
    <lineage>
        <taxon>Bacteria</taxon>
        <taxon>Pseudomonadati</taxon>
        <taxon>Pseudomonadota</taxon>
        <taxon>Betaproteobacteria</taxon>
        <taxon>Burkholderiales</taxon>
        <taxon>Burkholderiaceae</taxon>
        <taxon>Burkholderia</taxon>
        <taxon>Burkholderia cepacia complex</taxon>
    </lineage>
</organism>
<gene>
    <name evidence="1" type="primary">ureA</name>
    <name type="ordered locus">Bcep18194_A4008</name>
</gene>
<comment type="catalytic activity">
    <reaction evidence="1">
        <text>urea + 2 H2O + H(+) = hydrogencarbonate + 2 NH4(+)</text>
        <dbReference type="Rhea" id="RHEA:20557"/>
        <dbReference type="ChEBI" id="CHEBI:15377"/>
        <dbReference type="ChEBI" id="CHEBI:15378"/>
        <dbReference type="ChEBI" id="CHEBI:16199"/>
        <dbReference type="ChEBI" id="CHEBI:17544"/>
        <dbReference type="ChEBI" id="CHEBI:28938"/>
        <dbReference type="EC" id="3.5.1.5"/>
    </reaction>
</comment>
<comment type="pathway">
    <text evidence="1">Nitrogen metabolism; urea degradation; CO(2) and NH(3) from urea (urease route): step 1/1.</text>
</comment>
<comment type="subunit">
    <text evidence="1">Heterotrimer of UreA (gamma), UreB (beta) and UreC (alpha) subunits. Three heterotrimers associate to form the active enzyme.</text>
</comment>
<comment type="subcellular location">
    <subcellularLocation>
        <location evidence="1">Cytoplasm</location>
    </subcellularLocation>
</comment>
<comment type="similarity">
    <text evidence="1">Belongs to the urease gamma subunit family.</text>
</comment>
<name>URE3_BURL3</name>
<reference key="1">
    <citation type="submission" date="2005-10" db="EMBL/GenBank/DDBJ databases">
        <title>Complete sequence of chromosome 1 of Burkholderia sp. 383.</title>
        <authorList>
            <consortium name="US DOE Joint Genome Institute"/>
            <person name="Copeland A."/>
            <person name="Lucas S."/>
            <person name="Lapidus A."/>
            <person name="Barry K."/>
            <person name="Detter J.C."/>
            <person name="Glavina T."/>
            <person name="Hammon N."/>
            <person name="Israni S."/>
            <person name="Pitluck S."/>
            <person name="Chain P."/>
            <person name="Malfatti S."/>
            <person name="Shin M."/>
            <person name="Vergez L."/>
            <person name="Schmutz J."/>
            <person name="Larimer F."/>
            <person name="Land M."/>
            <person name="Kyrpides N."/>
            <person name="Lykidis A."/>
            <person name="Richardson P."/>
        </authorList>
    </citation>
    <scope>NUCLEOTIDE SEQUENCE [LARGE SCALE GENOMIC DNA]</scope>
    <source>
        <strain>ATCC 17760 / DSM 23089 / LMG 22485 / NCIMB 9086 / R18194 / 383</strain>
    </source>
</reference>
<evidence type="ECO:0000255" key="1">
    <source>
        <dbReference type="HAMAP-Rule" id="MF_00739"/>
    </source>
</evidence>